<name>Y738_SYNY3</name>
<comment type="similarity">
    <text evidence="1">Belongs to the UPF0150 family.</text>
</comment>
<evidence type="ECO:0000305" key="1"/>
<gene>
    <name type="ordered locus">ssl0738</name>
</gene>
<proteinExistence type="inferred from homology"/>
<keyword id="KW-1185">Reference proteome</keyword>
<dbReference type="EMBL" id="BA000022">
    <property type="protein sequence ID" value="BAA10401.1"/>
    <property type="molecule type" value="Genomic_DNA"/>
</dbReference>
<dbReference type="PIR" id="S76555">
    <property type="entry name" value="S76555"/>
</dbReference>
<dbReference type="SMR" id="P74794"/>
<dbReference type="STRING" id="1148.gene:10499902"/>
<dbReference type="PaxDb" id="1148-1673343"/>
<dbReference type="EnsemblBacteria" id="BAA10401">
    <property type="protein sequence ID" value="BAA10401"/>
    <property type="gene ID" value="BAA10401"/>
</dbReference>
<dbReference type="KEGG" id="syn:ssl0738"/>
<dbReference type="eggNOG" id="COG1598">
    <property type="taxonomic scope" value="Bacteria"/>
</dbReference>
<dbReference type="InParanoid" id="P74794"/>
<dbReference type="PhylomeDB" id="P74794"/>
<dbReference type="Proteomes" id="UP000001425">
    <property type="component" value="Chromosome"/>
</dbReference>
<dbReference type="GO" id="GO:0006355">
    <property type="term" value="P:regulation of DNA-templated transcription"/>
    <property type="evidence" value="ECO:0000318"/>
    <property type="project" value="GO_Central"/>
</dbReference>
<dbReference type="Gene3D" id="3.30.160.250">
    <property type="match status" value="1"/>
</dbReference>
<dbReference type="InterPro" id="IPR051404">
    <property type="entry name" value="TA_system_antitoxin"/>
</dbReference>
<dbReference type="InterPro" id="IPR035069">
    <property type="entry name" value="TTHA1013/TTHA0281-like"/>
</dbReference>
<dbReference type="PANTHER" id="PTHR34504">
    <property type="entry name" value="ANTITOXIN HICB"/>
    <property type="match status" value="1"/>
</dbReference>
<dbReference type="PANTHER" id="PTHR34504:SF4">
    <property type="entry name" value="ANTITOXIN HICB"/>
    <property type="match status" value="1"/>
</dbReference>
<dbReference type="SUPFAM" id="SSF143100">
    <property type="entry name" value="TTHA1013/TTHA0281-like"/>
    <property type="match status" value="1"/>
</dbReference>
<reference key="1">
    <citation type="journal article" date="1995" name="DNA Res.">
        <title>Sequence analysis of the genome of the unicellular cyanobacterium Synechocystis sp. strain PCC6803. I. Sequence features in the 1 Mb region from map positions 64% to 92% of the genome.</title>
        <authorList>
            <person name="Kaneko T."/>
            <person name="Tanaka A."/>
            <person name="Sato S."/>
            <person name="Kotani H."/>
            <person name="Sazuka T."/>
            <person name="Miyajima N."/>
            <person name="Sugiura M."/>
            <person name="Tabata S."/>
        </authorList>
    </citation>
    <scope>NUCLEOTIDE SEQUENCE [LARGE SCALE GENOMIC DNA]</scope>
    <source>
        <strain>ATCC 27184 / PCC 6803 / N-1</strain>
    </source>
</reference>
<reference key="2">
    <citation type="journal article" date="1996" name="DNA Res.">
        <title>Sequence analysis of the genome of the unicellular cyanobacterium Synechocystis sp. strain PCC6803. II. Sequence determination of the entire genome and assignment of potential protein-coding regions.</title>
        <authorList>
            <person name="Kaneko T."/>
            <person name="Sato S."/>
            <person name="Kotani H."/>
            <person name="Tanaka A."/>
            <person name="Asamizu E."/>
            <person name="Nakamura Y."/>
            <person name="Miyajima N."/>
            <person name="Hirosawa M."/>
            <person name="Sugiura M."/>
            <person name="Sasamoto S."/>
            <person name="Kimura T."/>
            <person name="Hosouchi T."/>
            <person name="Matsuno A."/>
            <person name="Muraki A."/>
            <person name="Nakazaki N."/>
            <person name="Naruo K."/>
            <person name="Okumura S."/>
            <person name="Shimpo S."/>
            <person name="Takeuchi C."/>
            <person name="Wada T."/>
            <person name="Watanabe A."/>
            <person name="Yamada M."/>
            <person name="Yasuda M."/>
            <person name="Tabata S."/>
        </authorList>
    </citation>
    <scope>NUCLEOTIDE SEQUENCE [LARGE SCALE GENOMIC DNA]</scope>
    <source>
        <strain>ATCC 27184 / PCC 6803 / Kazusa</strain>
    </source>
</reference>
<accession>P74794</accession>
<organism>
    <name type="scientific">Synechocystis sp. (strain ATCC 27184 / PCC 6803 / Kazusa)</name>
    <dbReference type="NCBI Taxonomy" id="1111708"/>
    <lineage>
        <taxon>Bacteria</taxon>
        <taxon>Bacillati</taxon>
        <taxon>Cyanobacteriota</taxon>
        <taxon>Cyanophyceae</taxon>
        <taxon>Synechococcales</taxon>
        <taxon>Merismopediaceae</taxon>
        <taxon>Synechocystis</taxon>
    </lineage>
</organism>
<feature type="chain" id="PRO_0000157935" description="UPF0150 protein ssl0738">
    <location>
        <begin position="1"/>
        <end position="72"/>
    </location>
</feature>
<sequence length="72" mass="7719">MKAELTAIIEAAEDGGYWAICPEIPGANGQGDTIAEAKASLKSAIQLIVEDRLEDIRRGLPEEAIEETILIP</sequence>
<protein>
    <recommendedName>
        <fullName>UPF0150 protein ssl0738</fullName>
    </recommendedName>
</protein>